<accession>Q6K7R9</accession>
<accession>B9F4M0</accession>
<evidence type="ECO:0000255" key="1"/>
<evidence type="ECO:0000255" key="2">
    <source>
        <dbReference type="PROSITE-ProRule" id="PRU00541"/>
    </source>
</evidence>
<evidence type="ECO:0000255" key="3">
    <source>
        <dbReference type="PROSITE-ProRule" id="PRU00542"/>
    </source>
</evidence>
<evidence type="ECO:0000256" key="4">
    <source>
        <dbReference type="SAM" id="MobiDB-lite"/>
    </source>
</evidence>
<evidence type="ECO:0000305" key="5"/>
<evidence type="ECO:0000312" key="6">
    <source>
        <dbReference type="EMBL" id="EEE58088.1"/>
    </source>
</evidence>
<feature type="chain" id="PRO_0000282518" description="DEAD-box ATP-dependent RNA helicase 48">
    <location>
        <begin position="1"/>
        <end position="811"/>
    </location>
</feature>
<feature type="domain" description="Helicase ATP-binding" evidence="2">
    <location>
        <begin position="373"/>
        <end position="556"/>
    </location>
</feature>
<feature type="domain" description="Helicase C-terminal" evidence="3">
    <location>
        <begin position="570"/>
        <end position="740"/>
    </location>
</feature>
<feature type="region of interest" description="Disordered" evidence="4">
    <location>
        <begin position="1"/>
        <end position="32"/>
    </location>
</feature>
<feature type="region of interest" description="Disordered" evidence="4">
    <location>
        <begin position="93"/>
        <end position="138"/>
    </location>
</feature>
<feature type="coiled-coil region" evidence="1">
    <location>
        <begin position="286"/>
        <end position="333"/>
    </location>
</feature>
<feature type="short sequence motif" description="Q motif">
    <location>
        <begin position="342"/>
        <end position="370"/>
    </location>
</feature>
<feature type="short sequence motif" description="DEAD box">
    <location>
        <begin position="504"/>
        <end position="507"/>
    </location>
</feature>
<feature type="compositionally biased region" description="Basic residues" evidence="4">
    <location>
        <begin position="15"/>
        <end position="29"/>
    </location>
</feature>
<feature type="compositionally biased region" description="Basic and acidic residues" evidence="4">
    <location>
        <begin position="95"/>
        <end position="104"/>
    </location>
</feature>
<feature type="compositionally biased region" description="Basic and acidic residues" evidence="4">
    <location>
        <begin position="117"/>
        <end position="138"/>
    </location>
</feature>
<feature type="binding site" evidence="2">
    <location>
        <begin position="386"/>
        <end position="393"/>
    </location>
    <ligand>
        <name>ATP</name>
        <dbReference type="ChEBI" id="CHEBI:30616"/>
    </ligand>
</feature>
<feature type="sequence conflict" description="In Ref. 5; AK101090." evidence="5" ref="5">
    <original>L</original>
    <variation>F</variation>
    <location>
        <position position="233"/>
    </location>
</feature>
<gene>
    <name type="ordered locus">Os02g0826100</name>
    <name type="ordered locus">LOC_Os02g57980</name>
    <name evidence="6" type="ORF">OsJ_08955</name>
    <name type="ORF">P0452F04.14</name>
</gene>
<reference key="1">
    <citation type="journal article" date="2005" name="Nature">
        <title>The map-based sequence of the rice genome.</title>
        <authorList>
            <consortium name="International rice genome sequencing project (IRGSP)"/>
        </authorList>
    </citation>
    <scope>NUCLEOTIDE SEQUENCE [LARGE SCALE GENOMIC DNA]</scope>
    <source>
        <strain>cv. Nipponbare</strain>
    </source>
</reference>
<reference key="2">
    <citation type="journal article" date="2008" name="Nucleic Acids Res.">
        <title>The rice annotation project database (RAP-DB): 2008 update.</title>
        <authorList>
            <consortium name="The rice annotation project (RAP)"/>
        </authorList>
    </citation>
    <scope>GENOME REANNOTATION</scope>
    <source>
        <strain>cv. Nipponbare</strain>
    </source>
</reference>
<reference key="3">
    <citation type="journal article" date="2013" name="Rice">
        <title>Improvement of the Oryza sativa Nipponbare reference genome using next generation sequence and optical map data.</title>
        <authorList>
            <person name="Kawahara Y."/>
            <person name="de la Bastide M."/>
            <person name="Hamilton J.P."/>
            <person name="Kanamori H."/>
            <person name="McCombie W.R."/>
            <person name="Ouyang S."/>
            <person name="Schwartz D.C."/>
            <person name="Tanaka T."/>
            <person name="Wu J."/>
            <person name="Zhou S."/>
            <person name="Childs K.L."/>
            <person name="Davidson R.M."/>
            <person name="Lin H."/>
            <person name="Quesada-Ocampo L."/>
            <person name="Vaillancourt B."/>
            <person name="Sakai H."/>
            <person name="Lee S.S."/>
            <person name="Kim J."/>
            <person name="Numa H."/>
            <person name="Itoh T."/>
            <person name="Buell C.R."/>
            <person name="Matsumoto T."/>
        </authorList>
    </citation>
    <scope>GENOME REANNOTATION</scope>
    <source>
        <strain>cv. Nipponbare</strain>
    </source>
</reference>
<reference key="4">
    <citation type="journal article" date="2005" name="PLoS Biol.">
        <title>The genomes of Oryza sativa: a history of duplications.</title>
        <authorList>
            <person name="Yu J."/>
            <person name="Wang J."/>
            <person name="Lin W."/>
            <person name="Li S."/>
            <person name="Li H."/>
            <person name="Zhou J."/>
            <person name="Ni P."/>
            <person name="Dong W."/>
            <person name="Hu S."/>
            <person name="Zeng C."/>
            <person name="Zhang J."/>
            <person name="Zhang Y."/>
            <person name="Li R."/>
            <person name="Xu Z."/>
            <person name="Li S."/>
            <person name="Li X."/>
            <person name="Zheng H."/>
            <person name="Cong L."/>
            <person name="Lin L."/>
            <person name="Yin J."/>
            <person name="Geng J."/>
            <person name="Li G."/>
            <person name="Shi J."/>
            <person name="Liu J."/>
            <person name="Lv H."/>
            <person name="Li J."/>
            <person name="Wang J."/>
            <person name="Deng Y."/>
            <person name="Ran L."/>
            <person name="Shi X."/>
            <person name="Wang X."/>
            <person name="Wu Q."/>
            <person name="Li C."/>
            <person name="Ren X."/>
            <person name="Wang J."/>
            <person name="Wang X."/>
            <person name="Li D."/>
            <person name="Liu D."/>
            <person name="Zhang X."/>
            <person name="Ji Z."/>
            <person name="Zhao W."/>
            <person name="Sun Y."/>
            <person name="Zhang Z."/>
            <person name="Bao J."/>
            <person name="Han Y."/>
            <person name="Dong L."/>
            <person name="Ji J."/>
            <person name="Chen P."/>
            <person name="Wu S."/>
            <person name="Liu J."/>
            <person name="Xiao Y."/>
            <person name="Bu D."/>
            <person name="Tan J."/>
            <person name="Yang L."/>
            <person name="Ye C."/>
            <person name="Zhang J."/>
            <person name="Xu J."/>
            <person name="Zhou Y."/>
            <person name="Yu Y."/>
            <person name="Zhang B."/>
            <person name="Zhuang S."/>
            <person name="Wei H."/>
            <person name="Liu B."/>
            <person name="Lei M."/>
            <person name="Yu H."/>
            <person name="Li Y."/>
            <person name="Xu H."/>
            <person name="Wei S."/>
            <person name="He X."/>
            <person name="Fang L."/>
            <person name="Zhang Z."/>
            <person name="Zhang Y."/>
            <person name="Huang X."/>
            <person name="Su Z."/>
            <person name="Tong W."/>
            <person name="Li J."/>
            <person name="Tong Z."/>
            <person name="Li S."/>
            <person name="Ye J."/>
            <person name="Wang L."/>
            <person name="Fang L."/>
            <person name="Lei T."/>
            <person name="Chen C.-S."/>
            <person name="Chen H.-C."/>
            <person name="Xu Z."/>
            <person name="Li H."/>
            <person name="Huang H."/>
            <person name="Zhang F."/>
            <person name="Xu H."/>
            <person name="Li N."/>
            <person name="Zhao C."/>
            <person name="Li S."/>
            <person name="Dong L."/>
            <person name="Huang Y."/>
            <person name="Li L."/>
            <person name="Xi Y."/>
            <person name="Qi Q."/>
            <person name="Li W."/>
            <person name="Zhang B."/>
            <person name="Hu W."/>
            <person name="Zhang Y."/>
            <person name="Tian X."/>
            <person name="Jiao Y."/>
            <person name="Liang X."/>
            <person name="Jin J."/>
            <person name="Gao L."/>
            <person name="Zheng W."/>
            <person name="Hao B."/>
            <person name="Liu S.-M."/>
            <person name="Wang W."/>
            <person name="Yuan L."/>
            <person name="Cao M."/>
            <person name="McDermott J."/>
            <person name="Samudrala R."/>
            <person name="Wang J."/>
            <person name="Wong G.K.-S."/>
            <person name="Yang H."/>
        </authorList>
    </citation>
    <scope>NUCLEOTIDE SEQUENCE [LARGE SCALE GENOMIC DNA]</scope>
    <source>
        <strain>cv. Nipponbare</strain>
    </source>
</reference>
<reference key="5">
    <citation type="journal article" date="2003" name="Science">
        <title>Collection, mapping, and annotation of over 28,000 cDNA clones from japonica rice.</title>
        <authorList>
            <consortium name="The rice full-length cDNA consortium"/>
        </authorList>
    </citation>
    <scope>NUCLEOTIDE SEQUENCE [LARGE SCALE MRNA]</scope>
    <source>
        <strain>cv. Nipponbare</strain>
    </source>
</reference>
<proteinExistence type="evidence at transcript level"/>
<keyword id="KW-0067">ATP-binding</keyword>
<keyword id="KW-0175">Coiled coil</keyword>
<keyword id="KW-0347">Helicase</keyword>
<keyword id="KW-0378">Hydrolase</keyword>
<keyword id="KW-0547">Nucleotide-binding</keyword>
<keyword id="KW-1185">Reference proteome</keyword>
<keyword id="KW-0694">RNA-binding</keyword>
<comment type="catalytic activity">
    <reaction>
        <text>ATP + H2O = ADP + phosphate + H(+)</text>
        <dbReference type="Rhea" id="RHEA:13065"/>
        <dbReference type="ChEBI" id="CHEBI:15377"/>
        <dbReference type="ChEBI" id="CHEBI:15378"/>
        <dbReference type="ChEBI" id="CHEBI:30616"/>
        <dbReference type="ChEBI" id="CHEBI:43474"/>
        <dbReference type="ChEBI" id="CHEBI:456216"/>
        <dbReference type="EC" id="3.6.4.13"/>
    </reaction>
</comment>
<comment type="domain">
    <text>The Q motif is unique to and characteristic of the DEAD box family of RNA helicases and controls ATP binding and hydrolysis.</text>
</comment>
<comment type="similarity">
    <text evidence="5">Belongs to the DEAD box helicase family.</text>
</comment>
<comment type="sequence caution" evidence="5">
    <conflict type="frameshift">
        <sequence resource="EMBL" id="AK101090"/>
    </conflict>
</comment>
<organism>
    <name type="scientific">Oryza sativa subsp. japonica</name>
    <name type="common">Rice</name>
    <dbReference type="NCBI Taxonomy" id="39947"/>
    <lineage>
        <taxon>Eukaryota</taxon>
        <taxon>Viridiplantae</taxon>
        <taxon>Streptophyta</taxon>
        <taxon>Embryophyta</taxon>
        <taxon>Tracheophyta</taxon>
        <taxon>Spermatophyta</taxon>
        <taxon>Magnoliopsida</taxon>
        <taxon>Liliopsida</taxon>
        <taxon>Poales</taxon>
        <taxon>Poaceae</taxon>
        <taxon>BOP clade</taxon>
        <taxon>Oryzoideae</taxon>
        <taxon>Oryzeae</taxon>
        <taxon>Oryzinae</taxon>
        <taxon>Oryza</taxon>
        <taxon>Oryza sativa</taxon>
    </lineage>
</organism>
<name>RH48_ORYSJ</name>
<protein>
    <recommendedName>
        <fullName>DEAD-box ATP-dependent RNA helicase 48</fullName>
        <ecNumber>3.6.4.13</ecNumber>
    </recommendedName>
</protein>
<dbReference type="EC" id="3.6.4.13"/>
<dbReference type="EMBL" id="AP004776">
    <property type="protein sequence ID" value="BAD23043.1"/>
    <property type="molecule type" value="Genomic_DNA"/>
</dbReference>
<dbReference type="EMBL" id="AP008208">
    <property type="protein sequence ID" value="BAF10498.1"/>
    <property type="molecule type" value="Genomic_DNA"/>
</dbReference>
<dbReference type="EMBL" id="AP014958">
    <property type="protein sequence ID" value="BAS81691.1"/>
    <property type="molecule type" value="Genomic_DNA"/>
</dbReference>
<dbReference type="EMBL" id="CM000139">
    <property type="protein sequence ID" value="EEE58088.1"/>
    <property type="molecule type" value="Genomic_DNA"/>
</dbReference>
<dbReference type="EMBL" id="AK101090">
    <property type="status" value="NOT_ANNOTATED_CDS"/>
    <property type="molecule type" value="mRNA"/>
</dbReference>
<dbReference type="RefSeq" id="XP_015626491.1">
    <property type="nucleotide sequence ID" value="XM_015771005.1"/>
</dbReference>
<dbReference type="SMR" id="Q6K7R9"/>
<dbReference type="FunCoup" id="Q6K7R9">
    <property type="interactions" value="205"/>
</dbReference>
<dbReference type="STRING" id="39947.Q6K7R9"/>
<dbReference type="PaxDb" id="39947-Q6K7R9"/>
<dbReference type="EnsemblPlants" id="Os02t0826100-01">
    <property type="protein sequence ID" value="Os02t0826100-01"/>
    <property type="gene ID" value="Os02g0826100"/>
</dbReference>
<dbReference type="Gramene" id="Os02t0826100-01">
    <property type="protein sequence ID" value="Os02t0826100-01"/>
    <property type="gene ID" value="Os02g0826100"/>
</dbReference>
<dbReference type="KEGG" id="dosa:Os02g0826100"/>
<dbReference type="eggNOG" id="KOG0342">
    <property type="taxonomic scope" value="Eukaryota"/>
</dbReference>
<dbReference type="HOGENOM" id="CLU_003041_26_6_1"/>
<dbReference type="InParanoid" id="Q6K7R9"/>
<dbReference type="OMA" id="NAMLKYH"/>
<dbReference type="OrthoDB" id="193716at2759"/>
<dbReference type="Proteomes" id="UP000000763">
    <property type="component" value="Chromosome 2"/>
</dbReference>
<dbReference type="Proteomes" id="UP000007752">
    <property type="component" value="Chromosome 2"/>
</dbReference>
<dbReference type="Proteomes" id="UP000059680">
    <property type="component" value="Chromosome 2"/>
</dbReference>
<dbReference type="GO" id="GO:0005524">
    <property type="term" value="F:ATP binding"/>
    <property type="evidence" value="ECO:0007669"/>
    <property type="project" value="UniProtKB-KW"/>
</dbReference>
<dbReference type="GO" id="GO:0016887">
    <property type="term" value="F:ATP hydrolysis activity"/>
    <property type="evidence" value="ECO:0007669"/>
    <property type="project" value="RHEA"/>
</dbReference>
<dbReference type="GO" id="GO:0003723">
    <property type="term" value="F:RNA binding"/>
    <property type="evidence" value="ECO:0007669"/>
    <property type="project" value="UniProtKB-KW"/>
</dbReference>
<dbReference type="GO" id="GO:0003724">
    <property type="term" value="F:RNA helicase activity"/>
    <property type="evidence" value="ECO:0007669"/>
    <property type="project" value="UniProtKB-EC"/>
</dbReference>
<dbReference type="CDD" id="cd18787">
    <property type="entry name" value="SF2_C_DEAD"/>
    <property type="match status" value="1"/>
</dbReference>
<dbReference type="FunFam" id="3.40.50.300:FF:005579">
    <property type="entry name" value="Putative LRR receptor-like serine/threonine-protein kinase"/>
    <property type="match status" value="1"/>
</dbReference>
<dbReference type="Gene3D" id="3.40.50.300">
    <property type="entry name" value="P-loop containing nucleotide triphosphate hydrolases"/>
    <property type="match status" value="2"/>
</dbReference>
<dbReference type="InterPro" id="IPR011545">
    <property type="entry name" value="DEAD/DEAH_box_helicase_dom"/>
</dbReference>
<dbReference type="InterPro" id="IPR014001">
    <property type="entry name" value="Helicase_ATP-bd"/>
</dbReference>
<dbReference type="InterPro" id="IPR001650">
    <property type="entry name" value="Helicase_C-like"/>
</dbReference>
<dbReference type="InterPro" id="IPR027417">
    <property type="entry name" value="P-loop_NTPase"/>
</dbReference>
<dbReference type="InterPro" id="IPR014014">
    <property type="entry name" value="RNA_helicase_DEAD_Q_motif"/>
</dbReference>
<dbReference type="PANTHER" id="PTHR24031">
    <property type="entry name" value="RNA HELICASE"/>
    <property type="match status" value="1"/>
</dbReference>
<dbReference type="Pfam" id="PF00270">
    <property type="entry name" value="DEAD"/>
    <property type="match status" value="1"/>
</dbReference>
<dbReference type="Pfam" id="PF00271">
    <property type="entry name" value="Helicase_C"/>
    <property type="match status" value="1"/>
</dbReference>
<dbReference type="SMART" id="SM00487">
    <property type="entry name" value="DEXDc"/>
    <property type="match status" value="1"/>
</dbReference>
<dbReference type="SMART" id="SM00490">
    <property type="entry name" value="HELICc"/>
    <property type="match status" value="1"/>
</dbReference>
<dbReference type="SUPFAM" id="SSF52540">
    <property type="entry name" value="P-loop containing nucleoside triphosphate hydrolases"/>
    <property type="match status" value="1"/>
</dbReference>
<dbReference type="PROSITE" id="PS51192">
    <property type="entry name" value="HELICASE_ATP_BIND_1"/>
    <property type="match status" value="1"/>
</dbReference>
<dbReference type="PROSITE" id="PS51194">
    <property type="entry name" value="HELICASE_CTER"/>
    <property type="match status" value="1"/>
</dbReference>
<dbReference type="PROSITE" id="PS51195">
    <property type="entry name" value="Q_MOTIF"/>
    <property type="match status" value="1"/>
</dbReference>
<sequence length="811" mass="91802">MGGGPRTFPGGLSKWQHKRMHEKLARHKERGLLRHEKQLYLARLRSEIRASRLPAAGASPPDDGDGPTSSRAHIRALADRFLLPGAEDLWNEDDGPIHRADRPRPPRRIVSVGGNGGDRRKLDSTKQELPRGGKEPRLAAFNPRRDFQTAAPWWWQWSSSSAIPSRTKEASFCFFGPKRSYSVMPLFQAHQESSGTSMVPLIARGLASARIAPSQLNGERFYSFAAGRFGRKLRPDSSDEDDEDISTAKKDMRFARFGASSEEESGYDELEARSAIRKKWSSAALRNCDMKKERRALKSYEEENNDLAGSFRELREEIKNREVLGAERRRYESRGESLFTNKRFEECGISPLTVKALTDAGYVQTTVVQETALPMCLEGKDVLVKAKTGTGKSAAFLLPAIESVLNAMKSHTNHRVSPIFSLILCPTRELAIQLTAEANVLLKYHQGIGVQSLIGGTRFKLDQRRLESDPCQILVATPGRLLDHIENKSSFSVRLMGLKLLVLDEADHLLDLGFRTDIEKIVDSLPRQRQTLLFSATIPKEVRRVSQLVLKRDHVFVDTVGLGAVETPTKVEQLYLVMPHELHFHMVYRLLREHIDQEVDYKVIVFCTTAMVTEFMYIMLRDLKLNVREIHSRKPQLYRTRISEEFRDSSRLILVTSDVSTRGVNYPGVTLVIQVGVPSDREHYIHRLGRTGREGKSGKGILLLAPWEEYFLNEIHDLPVQKSQTPNIDEEMKRKVDGSIKIVDMSIKEAAYHAWLGYYNSIGDVGRDKTMLVDLANRFCKSIGLEKPPALYRKTALKMGLKDVPGIRIRK</sequence>